<evidence type="ECO:0000250" key="1"/>
<evidence type="ECO:0000256" key="2">
    <source>
        <dbReference type="SAM" id="MobiDB-lite"/>
    </source>
</evidence>
<evidence type="ECO:0000305" key="3"/>
<keyword id="KW-0072">Autophagy</keyword>
<keyword id="KW-0963">Cytoplasm</keyword>
<keyword id="KW-0653">Protein transport</keyword>
<keyword id="KW-1185">Reference proteome</keyword>
<keyword id="KW-0813">Transport</keyword>
<keyword id="KW-0833">Ubl conjugation pathway</keyword>
<proteinExistence type="inferred from homology"/>
<dbReference type="EMBL" id="AAHF01000003">
    <property type="protein sequence ID" value="EAL91781.1"/>
    <property type="molecule type" value="Genomic_DNA"/>
</dbReference>
<dbReference type="RefSeq" id="XP_753819.1">
    <property type="nucleotide sequence ID" value="XM_748726.1"/>
</dbReference>
<dbReference type="SMR" id="Q4WUE5"/>
<dbReference type="FunCoup" id="Q4WUE5">
    <property type="interactions" value="1070"/>
</dbReference>
<dbReference type="STRING" id="330879.Q4WUE5"/>
<dbReference type="EnsemblFungi" id="EAL91781">
    <property type="protein sequence ID" value="EAL91781"/>
    <property type="gene ID" value="AFUA_5G08170"/>
</dbReference>
<dbReference type="GeneID" id="3511199"/>
<dbReference type="KEGG" id="afm:AFUA_5G08170"/>
<dbReference type="VEuPathDB" id="FungiDB:Afu5g08170"/>
<dbReference type="eggNOG" id="KOG2981">
    <property type="taxonomic scope" value="Eukaryota"/>
</dbReference>
<dbReference type="HOGENOM" id="CLU_027518_2_0_1"/>
<dbReference type="InParanoid" id="Q4WUE5"/>
<dbReference type="OMA" id="HCPTWSW"/>
<dbReference type="OrthoDB" id="1584384at2759"/>
<dbReference type="Proteomes" id="UP000002530">
    <property type="component" value="Chromosome 5"/>
</dbReference>
<dbReference type="GO" id="GO:0005829">
    <property type="term" value="C:cytosol"/>
    <property type="evidence" value="ECO:0000318"/>
    <property type="project" value="GO_Central"/>
</dbReference>
<dbReference type="GO" id="GO:0005739">
    <property type="term" value="C:mitochondrion"/>
    <property type="evidence" value="ECO:0007669"/>
    <property type="project" value="EnsemblFungi"/>
</dbReference>
<dbReference type="GO" id="GO:0061908">
    <property type="term" value="C:phagophore"/>
    <property type="evidence" value="ECO:0007669"/>
    <property type="project" value="EnsemblFungi"/>
</dbReference>
<dbReference type="GO" id="GO:0000407">
    <property type="term" value="C:phagophore assembly site"/>
    <property type="evidence" value="ECO:0000318"/>
    <property type="project" value="GO_Central"/>
</dbReference>
<dbReference type="GO" id="GO:0141046">
    <property type="term" value="F:Atg8-family conjugating enzyme activity"/>
    <property type="evidence" value="ECO:0000318"/>
    <property type="project" value="GO_Central"/>
</dbReference>
<dbReference type="GO" id="GO:0019776">
    <property type="term" value="F:Atg8-family ligase activity"/>
    <property type="evidence" value="ECO:0007669"/>
    <property type="project" value="EnsemblFungi"/>
</dbReference>
<dbReference type="GO" id="GO:0000045">
    <property type="term" value="P:autophagosome assembly"/>
    <property type="evidence" value="ECO:0000318"/>
    <property type="project" value="GO_Central"/>
</dbReference>
<dbReference type="GO" id="GO:0000422">
    <property type="term" value="P:autophagy of mitochondrion"/>
    <property type="evidence" value="ECO:0000318"/>
    <property type="project" value="GO_Central"/>
</dbReference>
<dbReference type="GO" id="GO:0061723">
    <property type="term" value="P:glycophagy"/>
    <property type="evidence" value="ECO:0000318"/>
    <property type="project" value="GO_Central"/>
</dbReference>
<dbReference type="GO" id="GO:0044804">
    <property type="term" value="P:nucleophagy"/>
    <property type="evidence" value="ECO:0000318"/>
    <property type="project" value="GO_Central"/>
</dbReference>
<dbReference type="GO" id="GO:0034727">
    <property type="term" value="P:piecemeal microautophagy of the nucleus"/>
    <property type="evidence" value="ECO:0007669"/>
    <property type="project" value="EnsemblFungi"/>
</dbReference>
<dbReference type="GO" id="GO:0006612">
    <property type="term" value="P:protein targeting to membrane"/>
    <property type="evidence" value="ECO:0007669"/>
    <property type="project" value="EnsemblFungi"/>
</dbReference>
<dbReference type="GO" id="GO:0015031">
    <property type="term" value="P:protein transport"/>
    <property type="evidence" value="ECO:0007669"/>
    <property type="project" value="UniProtKB-KW"/>
</dbReference>
<dbReference type="InterPro" id="IPR007135">
    <property type="entry name" value="Atg3/Atg10"/>
</dbReference>
<dbReference type="PANTHER" id="PTHR12866">
    <property type="entry name" value="UBIQUITIN-LIKE-CONJUGATING ENZYME ATG3"/>
    <property type="match status" value="1"/>
</dbReference>
<dbReference type="PANTHER" id="PTHR12866:SF2">
    <property type="entry name" value="UBIQUITIN-LIKE-CONJUGATING ENZYME ATG3"/>
    <property type="match status" value="1"/>
</dbReference>
<dbReference type="Pfam" id="PF03987">
    <property type="entry name" value="Autophagy_act_C"/>
    <property type="match status" value="1"/>
</dbReference>
<gene>
    <name type="primary">atg3</name>
    <name type="ORF">AFUA_5G08170</name>
</gene>
<organism>
    <name type="scientific">Aspergillus fumigatus (strain ATCC MYA-4609 / CBS 101355 / FGSC A1100 / Af293)</name>
    <name type="common">Neosartorya fumigata</name>
    <dbReference type="NCBI Taxonomy" id="330879"/>
    <lineage>
        <taxon>Eukaryota</taxon>
        <taxon>Fungi</taxon>
        <taxon>Dikarya</taxon>
        <taxon>Ascomycota</taxon>
        <taxon>Pezizomycotina</taxon>
        <taxon>Eurotiomycetes</taxon>
        <taxon>Eurotiomycetidae</taxon>
        <taxon>Eurotiales</taxon>
        <taxon>Aspergillaceae</taxon>
        <taxon>Aspergillus</taxon>
        <taxon>Aspergillus subgen. Fumigati</taxon>
    </lineage>
</organism>
<name>ATG3_ASPFU</name>
<protein>
    <recommendedName>
        <fullName>Autophagy-related protein 3</fullName>
    </recommendedName>
    <alternativeName>
        <fullName>Autophagy-related E2-like conjugation enzyme atg3</fullName>
    </alternativeName>
</protein>
<feature type="chain" id="PRO_0000317818" description="Autophagy-related protein 3">
    <location>
        <begin position="1"/>
        <end position="353"/>
    </location>
</feature>
<feature type="region of interest" description="Flexible region" evidence="1">
    <location>
        <begin position="85"/>
        <end position="174"/>
    </location>
</feature>
<feature type="region of interest" description="Disordered" evidence="2">
    <location>
        <begin position="107"/>
        <end position="156"/>
    </location>
</feature>
<feature type="region of interest" description="Handle region" evidence="1">
    <location>
        <begin position="249"/>
        <end position="329"/>
    </location>
</feature>
<feature type="compositionally biased region" description="Basic and acidic residues" evidence="2">
    <location>
        <begin position="120"/>
        <end position="136"/>
    </location>
</feature>
<feature type="compositionally biased region" description="Acidic residues" evidence="2">
    <location>
        <begin position="143"/>
        <end position="156"/>
    </location>
</feature>
<feature type="active site" description="Glycyl thioester intermediate" evidence="1">
    <location>
        <position position="245"/>
    </location>
</feature>
<accession>Q4WUE5</accession>
<sequence>MNILHSTLSTWRDRLAPVSRTSTFRTTGQITPEEFVLAGDYLVYKFPTWSWADASSPAKRVSYLPPGKQFLVTRGVPCHRRLNENFAGDAGHEDEIVRDMLSGADADDDDGWLRTGGGRDLAEKQAERIKDVRTVDESGNMGEQEDDEEDIPDMEDDDDDEEAIIREPAGKSTTQPTRTYNLYITYSNFYRTPRLYLSGYLSPSEPLPPHLMMEDIVGDYKDKTVTLEDFPWFDGGVKMASVHPCRHASVMKTLLDRADAALKIRRDKLKQAHSADQANRINSERGLEGLVDETRGLSLNEQQGHAAGGDEWEVLQHDEEDQVAIRVDQYLVVFLKFIASVTPGIEHDFTMGV</sequence>
<reference key="1">
    <citation type="journal article" date="2005" name="Nature">
        <title>Genomic sequence of the pathogenic and allergenic filamentous fungus Aspergillus fumigatus.</title>
        <authorList>
            <person name="Nierman W.C."/>
            <person name="Pain A."/>
            <person name="Anderson M.J."/>
            <person name="Wortman J.R."/>
            <person name="Kim H.S."/>
            <person name="Arroyo J."/>
            <person name="Berriman M."/>
            <person name="Abe K."/>
            <person name="Archer D.B."/>
            <person name="Bermejo C."/>
            <person name="Bennett J.W."/>
            <person name="Bowyer P."/>
            <person name="Chen D."/>
            <person name="Collins M."/>
            <person name="Coulsen R."/>
            <person name="Davies R."/>
            <person name="Dyer P.S."/>
            <person name="Farman M.L."/>
            <person name="Fedorova N."/>
            <person name="Fedorova N.D."/>
            <person name="Feldblyum T.V."/>
            <person name="Fischer R."/>
            <person name="Fosker N."/>
            <person name="Fraser A."/>
            <person name="Garcia J.L."/>
            <person name="Garcia M.J."/>
            <person name="Goble A."/>
            <person name="Goldman G.H."/>
            <person name="Gomi K."/>
            <person name="Griffith-Jones S."/>
            <person name="Gwilliam R."/>
            <person name="Haas B.J."/>
            <person name="Haas H."/>
            <person name="Harris D.E."/>
            <person name="Horiuchi H."/>
            <person name="Huang J."/>
            <person name="Humphray S."/>
            <person name="Jimenez J."/>
            <person name="Keller N."/>
            <person name="Khouri H."/>
            <person name="Kitamoto K."/>
            <person name="Kobayashi T."/>
            <person name="Konzack S."/>
            <person name="Kulkarni R."/>
            <person name="Kumagai T."/>
            <person name="Lafton A."/>
            <person name="Latge J.-P."/>
            <person name="Li W."/>
            <person name="Lord A."/>
            <person name="Lu C."/>
            <person name="Majoros W.H."/>
            <person name="May G.S."/>
            <person name="Miller B.L."/>
            <person name="Mohamoud Y."/>
            <person name="Molina M."/>
            <person name="Monod M."/>
            <person name="Mouyna I."/>
            <person name="Mulligan S."/>
            <person name="Murphy L.D."/>
            <person name="O'Neil S."/>
            <person name="Paulsen I."/>
            <person name="Penalva M.A."/>
            <person name="Pertea M."/>
            <person name="Price C."/>
            <person name="Pritchard B.L."/>
            <person name="Quail M.A."/>
            <person name="Rabbinowitsch E."/>
            <person name="Rawlins N."/>
            <person name="Rajandream M.A."/>
            <person name="Reichard U."/>
            <person name="Renauld H."/>
            <person name="Robson G.D."/>
            <person name="Rodriguez de Cordoba S."/>
            <person name="Rodriguez-Pena J.M."/>
            <person name="Ronning C.M."/>
            <person name="Rutter S."/>
            <person name="Salzberg S.L."/>
            <person name="Sanchez M."/>
            <person name="Sanchez-Ferrero J.C."/>
            <person name="Saunders D."/>
            <person name="Seeger K."/>
            <person name="Squares R."/>
            <person name="Squares S."/>
            <person name="Takeuchi M."/>
            <person name="Tekaia F."/>
            <person name="Turner G."/>
            <person name="Vazquez de Aldana C.R."/>
            <person name="Weidman J."/>
            <person name="White O."/>
            <person name="Woodward J.R."/>
            <person name="Yu J.-H."/>
            <person name="Fraser C.M."/>
            <person name="Galagan J.E."/>
            <person name="Asai K."/>
            <person name="Machida M."/>
            <person name="Hall N."/>
            <person name="Barrell B.G."/>
            <person name="Denning D.W."/>
        </authorList>
    </citation>
    <scope>NUCLEOTIDE SEQUENCE [LARGE SCALE GENOMIC DNA]</scope>
    <source>
        <strain>ATCC MYA-4609 / CBS 101355 / FGSC A1100 / Af293</strain>
    </source>
</reference>
<comment type="function">
    <text evidence="1">E2 conjugating enzyme required for the cytoplasm to vacuole transport (Cvt) and autophagy. Required for selective autophagic degradation of the nucleus (nucleophagy) as well as for mitophagy which contributes to regulate mitochondrial quantity and quality by eliminating the mitochondria to a basal level to fulfill cellular energy requirements and preventing excess ROS production. Responsible for the E2-like covalent binding of phosphatidylethanolamine to the C-terminal Gly of atg8. The atg12-atg5 conjugate plays a role of an E3 and promotes the transfer of atg8 from atg3 to phosphatidylethanolamine (PE). This step is required for the membrane association of atg8. The formation of the atg8-phosphatidylethanolamine conjugate is essential for autophagy and for the cytoplasm to vacuole transport (Cvt). The atg8-PE conjugate mediates tethering between adjacent membranes and stimulates membrane hemifusion, leading to expansion of the autophagosomal membrane during autophagy (By similarity).</text>
</comment>
<comment type="subunit">
    <text evidence="1">Monomer. Interacts with atg8 through an intermediate thioester bond through the C-terminal Gly of atg8. Also interacts with the 40 amino acid C-terminal region of the E1-like atg7 enzyme. Also interacts with the atg12-atg5 conjugate.</text>
</comment>
<comment type="subcellular location">
    <subcellularLocation>
        <location evidence="1">Cytoplasm</location>
    </subcellularLocation>
</comment>
<comment type="domain">
    <text evidence="1">The flexible region (FR) is required for atg7-binding.</text>
</comment>
<comment type="domain">
    <text evidence="1">The handle region (HR) contains the atg8 interaction motif (AIM) and mediates binding to atg8. It is crucial for the cytoplasm-to-vacuole targeting pathway (By similarity).</text>
</comment>
<comment type="similarity">
    <text evidence="3">Belongs to the ATG3 family.</text>
</comment>